<organism>
    <name type="scientific">Pseudomonas fluorescens (strain ATCC BAA-477 / NRRL B-23932 / Pf-5)</name>
    <dbReference type="NCBI Taxonomy" id="220664"/>
    <lineage>
        <taxon>Bacteria</taxon>
        <taxon>Pseudomonadati</taxon>
        <taxon>Pseudomonadota</taxon>
        <taxon>Gammaproteobacteria</taxon>
        <taxon>Pseudomonadales</taxon>
        <taxon>Pseudomonadaceae</taxon>
        <taxon>Pseudomonas</taxon>
    </lineage>
</organism>
<sequence>MNALTLPDIAAQASRQTLPLEWVGMCGIALPVVINNQPSAAKADAGVSLDDGEARGIHMSRLYLALEMLEQENLTPALLRRILQRFLDSHEGLAHSAYLRIQLDLLLKRPALVSPLAGWKSYPLSIEARLKNAMFHVELKIDVPYSSTCPCSAALARQLIQQQFIEDFANRPLQHADVLAWLGSPQGVVATPHSQRSNAALHLRLDDFIDELPLIALINDAENALGTAVQTAVKRADEQAFALANGQNLMFCEDAARRLNLALRRSPGINAFQLRVVHAESLHAHDAVAESRWNWEA</sequence>
<evidence type="ECO:0000255" key="1">
    <source>
        <dbReference type="HAMAP-Rule" id="MF_01527"/>
    </source>
</evidence>
<comment type="function">
    <text evidence="1">Converts GTP to 7,8-dihydroneopterin triphosphate.</text>
</comment>
<comment type="catalytic activity">
    <reaction evidence="1">
        <text>GTP + H2O = 7,8-dihydroneopterin 3'-triphosphate + formate + H(+)</text>
        <dbReference type="Rhea" id="RHEA:17473"/>
        <dbReference type="ChEBI" id="CHEBI:15377"/>
        <dbReference type="ChEBI" id="CHEBI:15378"/>
        <dbReference type="ChEBI" id="CHEBI:15740"/>
        <dbReference type="ChEBI" id="CHEBI:37565"/>
        <dbReference type="ChEBI" id="CHEBI:58462"/>
        <dbReference type="EC" id="3.5.4.16"/>
    </reaction>
</comment>
<comment type="pathway">
    <text evidence="1">Cofactor biosynthesis; 7,8-dihydroneopterin triphosphate biosynthesis; 7,8-dihydroneopterin triphosphate from GTP: step 1/1.</text>
</comment>
<comment type="similarity">
    <text evidence="1">Belongs to the GTP cyclohydrolase IV family.</text>
</comment>
<keyword id="KW-0378">Hydrolase</keyword>
<proteinExistence type="inferred from homology"/>
<feature type="chain" id="PRO_0000289509" description="GTP cyclohydrolase FolE2">
    <location>
        <begin position="1"/>
        <end position="297"/>
    </location>
</feature>
<feature type="site" description="May be catalytically important" evidence="1">
    <location>
        <position position="149"/>
    </location>
</feature>
<protein>
    <recommendedName>
        <fullName evidence="1">GTP cyclohydrolase FolE2</fullName>
        <ecNumber evidence="1">3.5.4.16</ecNumber>
    </recommendedName>
</protein>
<name>GCH4_PSEF5</name>
<gene>
    <name evidence="1" type="primary">folE2</name>
    <name type="ordered locus">PFL_6177</name>
</gene>
<reference key="1">
    <citation type="journal article" date="2005" name="Nat. Biotechnol.">
        <title>Complete genome sequence of the plant commensal Pseudomonas fluorescens Pf-5.</title>
        <authorList>
            <person name="Paulsen I.T."/>
            <person name="Press C.M."/>
            <person name="Ravel J."/>
            <person name="Kobayashi D.Y."/>
            <person name="Myers G.S.A."/>
            <person name="Mavrodi D.V."/>
            <person name="DeBoy R.T."/>
            <person name="Seshadri R."/>
            <person name="Ren Q."/>
            <person name="Madupu R."/>
            <person name="Dodson R.J."/>
            <person name="Durkin A.S."/>
            <person name="Brinkac L.M."/>
            <person name="Daugherty S.C."/>
            <person name="Sullivan S.A."/>
            <person name="Rosovitz M.J."/>
            <person name="Gwinn M.L."/>
            <person name="Zhou L."/>
            <person name="Schneider D.J."/>
            <person name="Cartinhour S.W."/>
            <person name="Nelson W.C."/>
            <person name="Weidman J."/>
            <person name="Watkins K."/>
            <person name="Tran K."/>
            <person name="Khouri H."/>
            <person name="Pierson E.A."/>
            <person name="Pierson L.S. III"/>
            <person name="Thomashow L.S."/>
            <person name="Loper J.E."/>
        </authorList>
    </citation>
    <scope>NUCLEOTIDE SEQUENCE [LARGE SCALE GENOMIC DNA]</scope>
    <source>
        <strain>ATCC BAA-477 / NRRL B-23932 / Pf-5</strain>
    </source>
</reference>
<dbReference type="EC" id="3.5.4.16" evidence="1"/>
<dbReference type="EMBL" id="CP000076">
    <property type="protein sequence ID" value="AAY95365.1"/>
    <property type="molecule type" value="Genomic_DNA"/>
</dbReference>
<dbReference type="RefSeq" id="WP_011064342.1">
    <property type="nucleotide sequence ID" value="NC_004129.6"/>
</dbReference>
<dbReference type="SMR" id="Q4K3E8"/>
<dbReference type="STRING" id="220664.PFL_6177"/>
<dbReference type="KEGG" id="pfl:PFL_6177"/>
<dbReference type="PATRIC" id="fig|220664.5.peg.6306"/>
<dbReference type="eggNOG" id="COG1469">
    <property type="taxonomic scope" value="Bacteria"/>
</dbReference>
<dbReference type="HOGENOM" id="CLU_062816_0_0_6"/>
<dbReference type="UniPathway" id="UPA00848">
    <property type="reaction ID" value="UER00151"/>
</dbReference>
<dbReference type="Proteomes" id="UP000008540">
    <property type="component" value="Chromosome"/>
</dbReference>
<dbReference type="GO" id="GO:0003934">
    <property type="term" value="F:GTP cyclohydrolase I activity"/>
    <property type="evidence" value="ECO:0007669"/>
    <property type="project" value="UniProtKB-UniRule"/>
</dbReference>
<dbReference type="GO" id="GO:0046654">
    <property type="term" value="P:tetrahydrofolate biosynthetic process"/>
    <property type="evidence" value="ECO:0007669"/>
    <property type="project" value="UniProtKB-UniRule"/>
</dbReference>
<dbReference type="Gene3D" id="3.10.270.10">
    <property type="entry name" value="Urate Oxidase"/>
    <property type="match status" value="1"/>
</dbReference>
<dbReference type="HAMAP" id="MF_01527_B">
    <property type="entry name" value="GTP_cyclohydrol_B"/>
    <property type="match status" value="1"/>
</dbReference>
<dbReference type="InterPro" id="IPR022838">
    <property type="entry name" value="GTP_cyclohydrolase_FolE2"/>
</dbReference>
<dbReference type="InterPro" id="IPR003801">
    <property type="entry name" value="GTP_cyclohydrolase_FolE2/MptA"/>
</dbReference>
<dbReference type="NCBIfam" id="NF010200">
    <property type="entry name" value="PRK13674.1-1"/>
    <property type="match status" value="1"/>
</dbReference>
<dbReference type="PANTHER" id="PTHR36445">
    <property type="entry name" value="GTP CYCLOHYDROLASE MPTA"/>
    <property type="match status" value="1"/>
</dbReference>
<dbReference type="PANTHER" id="PTHR36445:SF1">
    <property type="entry name" value="GTP CYCLOHYDROLASE MPTA"/>
    <property type="match status" value="1"/>
</dbReference>
<dbReference type="Pfam" id="PF02649">
    <property type="entry name" value="GCHY-1"/>
    <property type="match status" value="1"/>
</dbReference>
<accession>Q4K3E8</accession>